<keyword id="KW-0002">3D-structure</keyword>
<keyword id="KW-0007">Acetylation</keyword>
<keyword id="KW-0028">Amino-acid biosynthesis</keyword>
<keyword id="KW-0521">NADP</keyword>
<keyword id="KW-0560">Oxidoreductase</keyword>
<keyword id="KW-0641">Proline biosynthesis</keyword>
<keyword id="KW-1185">Reference proteome</keyword>
<comment type="function">
    <text>Catalyzes the NADPH dependent reduction of L-gamma-glutamyl 5-phosphate into L-glutamate 5-semialdehyde and phosphate. The product spontaneously undergoes cyclization to form 1-pyrroline-5-carboxylate.</text>
</comment>
<comment type="catalytic activity">
    <reaction>
        <text>L-glutamate 5-semialdehyde + phosphate + NADP(+) = L-glutamyl 5-phosphate + NADPH + H(+)</text>
        <dbReference type="Rhea" id="RHEA:19541"/>
        <dbReference type="ChEBI" id="CHEBI:15378"/>
        <dbReference type="ChEBI" id="CHEBI:43474"/>
        <dbReference type="ChEBI" id="CHEBI:57783"/>
        <dbReference type="ChEBI" id="CHEBI:58066"/>
        <dbReference type="ChEBI" id="CHEBI:58274"/>
        <dbReference type="ChEBI" id="CHEBI:58349"/>
        <dbReference type="EC" id="1.2.1.41"/>
    </reaction>
</comment>
<comment type="pathway">
    <text>Amino-acid biosynthesis; L-proline biosynthesis; L-glutamate 5-semialdehyde from L-glutamate: step 2/2.</text>
</comment>
<comment type="miscellaneous">
    <text evidence="1">Present with 6920 molecules/cell in log phase SD medium.</text>
</comment>
<comment type="similarity">
    <text evidence="2">Belongs to the gamma-glutamyl phosphate reductase family.</text>
</comment>
<gene>
    <name type="primary">PRO2</name>
    <name type="ordered locus">YOR323C</name>
    <name type="ORF">O6155</name>
</gene>
<proteinExistence type="evidence at protein level"/>
<sequence>MSSSQQIAKNARKAGNILKTISNEGRSDILYKIHDALKANAHAIEEANKIDLAVAKETGLADSLLKRLDLFKGDKFEVMLQGIKDVAELEDPVGKVKMARELDDGLTLYQVTAPVGVLLVIFESRPEVIANITALSIKSGNAAILKGGKESVNTFREMAKIVNDTIAQFQSETGVPVGSVQLIETRQDVSDLLDQDEYIDLVVPRGSNALVRKIKDTTKIPVLGHADGICSIYLDEDADLIKAKRISLDAKTNYPAGCNAMETLLINPKFSKWWEVLENLTLEGGVTIHATKDLKTAYFDKLNELGKLTEAIQCKTVDADEEQDFDKEFLSLDLAAKFVTSTESAIQHINTHSSRHTDAIVTENKANAEKFMKGVDSSGVYWNASTRFADGFRYGFGAEVGISTSKIHARGPVGLDGLVSYQYQIRGDGQVASDYLGAGGNKAFVHKDLDIKTVTL</sequence>
<dbReference type="EC" id="1.2.1.41"/>
<dbReference type="EMBL" id="U43565">
    <property type="protein sequence ID" value="AAA86261.1"/>
    <property type="molecule type" value="Genomic_DNA"/>
</dbReference>
<dbReference type="EMBL" id="X90565">
    <property type="protein sequence ID" value="CAA62179.1"/>
    <property type="molecule type" value="Genomic_DNA"/>
</dbReference>
<dbReference type="EMBL" id="Z75231">
    <property type="protein sequence ID" value="CAA99643.1"/>
    <property type="molecule type" value="Genomic_DNA"/>
</dbReference>
<dbReference type="EMBL" id="AY692984">
    <property type="protein sequence ID" value="AAT93003.1"/>
    <property type="molecule type" value="Genomic_DNA"/>
</dbReference>
<dbReference type="EMBL" id="BK006948">
    <property type="protein sequence ID" value="DAA11087.1"/>
    <property type="molecule type" value="Genomic_DNA"/>
</dbReference>
<dbReference type="PIR" id="S58334">
    <property type="entry name" value="S58334"/>
</dbReference>
<dbReference type="RefSeq" id="NP_014968.1">
    <property type="nucleotide sequence ID" value="NM_001183743.1"/>
</dbReference>
<dbReference type="PDB" id="1VLU">
    <property type="method" value="X-ray"/>
    <property type="resolution" value="2.29 A"/>
    <property type="chains" value="A/B=1-456"/>
</dbReference>
<dbReference type="PDBsum" id="1VLU"/>
<dbReference type="SMR" id="P54885"/>
<dbReference type="BioGRID" id="34709">
    <property type="interactions" value="57"/>
</dbReference>
<dbReference type="DIP" id="DIP-6586N"/>
<dbReference type="FunCoup" id="P54885">
    <property type="interactions" value="1101"/>
</dbReference>
<dbReference type="IntAct" id="P54885">
    <property type="interactions" value="21"/>
</dbReference>
<dbReference type="MINT" id="P54885"/>
<dbReference type="STRING" id="4932.YOR323C"/>
<dbReference type="iPTMnet" id="P54885"/>
<dbReference type="PaxDb" id="4932-YOR323C"/>
<dbReference type="PeptideAtlas" id="P54885"/>
<dbReference type="EnsemblFungi" id="YOR323C_mRNA">
    <property type="protein sequence ID" value="YOR323C"/>
    <property type="gene ID" value="YOR323C"/>
</dbReference>
<dbReference type="GeneID" id="854501"/>
<dbReference type="KEGG" id="sce:YOR323C"/>
<dbReference type="AGR" id="SGD:S000005850"/>
<dbReference type="SGD" id="S000005850">
    <property type="gene designation" value="PRO2"/>
</dbReference>
<dbReference type="VEuPathDB" id="FungiDB:YOR323C"/>
<dbReference type="eggNOG" id="KOG4165">
    <property type="taxonomic scope" value="Eukaryota"/>
</dbReference>
<dbReference type="GeneTree" id="ENSGT00500000044903"/>
<dbReference type="HOGENOM" id="CLU_030231_0_1_1"/>
<dbReference type="InParanoid" id="P54885"/>
<dbReference type="OMA" id="KTQRYGT"/>
<dbReference type="OrthoDB" id="1934954at2759"/>
<dbReference type="BioCyc" id="YEAST:YOR323C-MONOMER"/>
<dbReference type="Reactome" id="R-SCE-8964539">
    <property type="pathway name" value="Glutamate and glutamine metabolism"/>
</dbReference>
<dbReference type="Reactome" id="R-SCE-9837999">
    <property type="pathway name" value="Mitochondrial protein degradation"/>
</dbReference>
<dbReference type="UniPathway" id="UPA00098">
    <property type="reaction ID" value="UER00360"/>
</dbReference>
<dbReference type="BioGRID-ORCS" id="854501">
    <property type="hits" value="8 hits in 10 CRISPR screens"/>
</dbReference>
<dbReference type="ChiTaRS" id="PRO2">
    <property type="organism name" value="yeast"/>
</dbReference>
<dbReference type="EvolutionaryTrace" id="P54885"/>
<dbReference type="PRO" id="PR:P54885"/>
<dbReference type="Proteomes" id="UP000002311">
    <property type="component" value="Chromosome XV"/>
</dbReference>
<dbReference type="RNAct" id="P54885">
    <property type="molecule type" value="protein"/>
</dbReference>
<dbReference type="GO" id="GO:0005737">
    <property type="term" value="C:cytoplasm"/>
    <property type="evidence" value="ECO:0007005"/>
    <property type="project" value="SGD"/>
</dbReference>
<dbReference type="GO" id="GO:0005829">
    <property type="term" value="C:cytosol"/>
    <property type="evidence" value="ECO:0000314"/>
    <property type="project" value="SGD"/>
</dbReference>
<dbReference type="GO" id="GO:0005634">
    <property type="term" value="C:nucleus"/>
    <property type="evidence" value="ECO:0007005"/>
    <property type="project" value="SGD"/>
</dbReference>
<dbReference type="GO" id="GO:0004350">
    <property type="term" value="F:glutamate-5-semialdehyde dehydrogenase activity"/>
    <property type="evidence" value="ECO:0000314"/>
    <property type="project" value="SGD"/>
</dbReference>
<dbReference type="GO" id="GO:0050661">
    <property type="term" value="F:NADP binding"/>
    <property type="evidence" value="ECO:0007669"/>
    <property type="project" value="InterPro"/>
</dbReference>
<dbReference type="GO" id="GO:0055129">
    <property type="term" value="P:L-proline biosynthetic process"/>
    <property type="evidence" value="ECO:0007669"/>
    <property type="project" value="UniProtKB-UniPathway"/>
</dbReference>
<dbReference type="GO" id="GO:0006561">
    <property type="term" value="P:proline biosynthetic process"/>
    <property type="evidence" value="ECO:0000314"/>
    <property type="project" value="SGD"/>
</dbReference>
<dbReference type="CDD" id="cd07079">
    <property type="entry name" value="ALDH_F18-19_ProA-GPR"/>
    <property type="match status" value="1"/>
</dbReference>
<dbReference type="FunFam" id="3.40.309.10:FF:000006">
    <property type="entry name" value="Gamma-glutamyl phosphate reductase"/>
    <property type="match status" value="1"/>
</dbReference>
<dbReference type="Gene3D" id="3.40.605.10">
    <property type="entry name" value="Aldehyde Dehydrogenase, Chain A, domain 1"/>
    <property type="match status" value="1"/>
</dbReference>
<dbReference type="Gene3D" id="3.40.309.10">
    <property type="entry name" value="Aldehyde Dehydrogenase, Chain A, domain 2"/>
    <property type="match status" value="1"/>
</dbReference>
<dbReference type="HAMAP" id="MF_00412">
    <property type="entry name" value="ProA"/>
    <property type="match status" value="1"/>
</dbReference>
<dbReference type="InterPro" id="IPR016161">
    <property type="entry name" value="Ald_DH/histidinol_DH"/>
</dbReference>
<dbReference type="InterPro" id="IPR016163">
    <property type="entry name" value="Ald_DH_C"/>
</dbReference>
<dbReference type="InterPro" id="IPR016162">
    <property type="entry name" value="Ald_DH_N"/>
</dbReference>
<dbReference type="InterPro" id="IPR015590">
    <property type="entry name" value="Aldehyde_DH_dom"/>
</dbReference>
<dbReference type="InterPro" id="IPR020593">
    <property type="entry name" value="G-glutamylP_reductase_CS"/>
</dbReference>
<dbReference type="InterPro" id="IPR012134">
    <property type="entry name" value="Glu-5-SA_DH"/>
</dbReference>
<dbReference type="InterPro" id="IPR000965">
    <property type="entry name" value="GPR_dom"/>
</dbReference>
<dbReference type="NCBIfam" id="NF001221">
    <property type="entry name" value="PRK00197.1"/>
    <property type="match status" value="1"/>
</dbReference>
<dbReference type="NCBIfam" id="TIGR00407">
    <property type="entry name" value="proA"/>
    <property type="match status" value="1"/>
</dbReference>
<dbReference type="PANTHER" id="PTHR11063:SF8">
    <property type="entry name" value="DELTA-1-PYRROLINE-5-CARBOXYLATE SYNTHASE"/>
    <property type="match status" value="1"/>
</dbReference>
<dbReference type="PANTHER" id="PTHR11063">
    <property type="entry name" value="GLUTAMATE SEMIALDEHYDE DEHYDROGENASE"/>
    <property type="match status" value="1"/>
</dbReference>
<dbReference type="Pfam" id="PF00171">
    <property type="entry name" value="Aldedh"/>
    <property type="match status" value="1"/>
</dbReference>
<dbReference type="PIRSF" id="PIRSF000151">
    <property type="entry name" value="GPR"/>
    <property type="match status" value="1"/>
</dbReference>
<dbReference type="SUPFAM" id="SSF53720">
    <property type="entry name" value="ALDH-like"/>
    <property type="match status" value="1"/>
</dbReference>
<dbReference type="PROSITE" id="PS01223">
    <property type="entry name" value="PROA"/>
    <property type="match status" value="1"/>
</dbReference>
<organism>
    <name type="scientific">Saccharomyces cerevisiae (strain ATCC 204508 / S288c)</name>
    <name type="common">Baker's yeast</name>
    <dbReference type="NCBI Taxonomy" id="559292"/>
    <lineage>
        <taxon>Eukaryota</taxon>
        <taxon>Fungi</taxon>
        <taxon>Dikarya</taxon>
        <taxon>Ascomycota</taxon>
        <taxon>Saccharomycotina</taxon>
        <taxon>Saccharomycetes</taxon>
        <taxon>Saccharomycetales</taxon>
        <taxon>Saccharomycetaceae</taxon>
        <taxon>Saccharomyces</taxon>
    </lineage>
</organism>
<reference key="1">
    <citation type="submission" date="1996-01" db="EMBL/GenBank/DDBJ databases">
        <title>Mutations in Saccharomyces cerevisiae CTD kinase gene CTK1 are synthetic lethals with mutant versions of SSD1 and PRO2.</title>
        <authorList>
            <person name="Lee J.M."/>
            <person name="Greenleaf A.L."/>
        </authorList>
    </citation>
    <scope>NUCLEOTIDE SEQUENCE [GENOMIC DNA]</scope>
</reference>
<reference key="2">
    <citation type="journal article" date="1996" name="Yeast">
        <title>Sequencing of a 35.71 kb DNA segment on the right arm of yeast chromosome XV reveals regions of similarity to chromosomes I and XIII.</title>
        <authorList>
            <person name="Pearson B.M."/>
            <person name="Hernando Y."/>
            <person name="Payne J."/>
            <person name="Wolf S.S."/>
            <person name="Kalogeropoulos A."/>
            <person name="Schweizer M."/>
        </authorList>
    </citation>
    <scope>NUCLEOTIDE SEQUENCE [GENOMIC DNA]</scope>
    <source>
        <strain>ATCC 96604 / S288c / FY1679</strain>
    </source>
</reference>
<reference key="3">
    <citation type="journal article" date="1997" name="Nature">
        <title>The nucleotide sequence of Saccharomyces cerevisiae chromosome XV.</title>
        <authorList>
            <person name="Dujon B."/>
            <person name="Albermann K."/>
            <person name="Aldea M."/>
            <person name="Alexandraki D."/>
            <person name="Ansorge W."/>
            <person name="Arino J."/>
            <person name="Benes V."/>
            <person name="Bohn C."/>
            <person name="Bolotin-Fukuhara M."/>
            <person name="Bordonne R."/>
            <person name="Boyer J."/>
            <person name="Camasses A."/>
            <person name="Casamayor A."/>
            <person name="Casas C."/>
            <person name="Cheret G."/>
            <person name="Cziepluch C."/>
            <person name="Daignan-Fornier B."/>
            <person name="Dang V.-D."/>
            <person name="de Haan M."/>
            <person name="Delius H."/>
            <person name="Durand P."/>
            <person name="Fairhead C."/>
            <person name="Feldmann H."/>
            <person name="Gaillon L."/>
            <person name="Galisson F."/>
            <person name="Gamo F.-J."/>
            <person name="Gancedo C."/>
            <person name="Goffeau A."/>
            <person name="Goulding S.E."/>
            <person name="Grivell L.A."/>
            <person name="Habbig B."/>
            <person name="Hand N.J."/>
            <person name="Hani J."/>
            <person name="Hattenhorst U."/>
            <person name="Hebling U."/>
            <person name="Hernando Y."/>
            <person name="Herrero E."/>
            <person name="Heumann K."/>
            <person name="Hiesel R."/>
            <person name="Hilger F."/>
            <person name="Hofmann B."/>
            <person name="Hollenberg C.P."/>
            <person name="Hughes B."/>
            <person name="Jauniaux J.-C."/>
            <person name="Kalogeropoulos A."/>
            <person name="Katsoulou C."/>
            <person name="Kordes E."/>
            <person name="Lafuente M.J."/>
            <person name="Landt O."/>
            <person name="Louis E.J."/>
            <person name="Maarse A.C."/>
            <person name="Madania A."/>
            <person name="Mannhaupt G."/>
            <person name="Marck C."/>
            <person name="Martin R.P."/>
            <person name="Mewes H.-W."/>
            <person name="Michaux G."/>
            <person name="Paces V."/>
            <person name="Parle-McDermott A.G."/>
            <person name="Pearson B.M."/>
            <person name="Perrin A."/>
            <person name="Pettersson B."/>
            <person name="Poch O."/>
            <person name="Pohl T.M."/>
            <person name="Poirey R."/>
            <person name="Portetelle D."/>
            <person name="Pujol A."/>
            <person name="Purnelle B."/>
            <person name="Ramezani Rad M."/>
            <person name="Rechmann S."/>
            <person name="Schwager C."/>
            <person name="Schweizer M."/>
            <person name="Sor F."/>
            <person name="Sterky F."/>
            <person name="Tarassov I.A."/>
            <person name="Teodoru C."/>
            <person name="Tettelin H."/>
            <person name="Thierry A."/>
            <person name="Tobiasch E."/>
            <person name="Tzermia M."/>
            <person name="Uhlen M."/>
            <person name="Unseld M."/>
            <person name="Valens M."/>
            <person name="Vandenbol M."/>
            <person name="Vetter I."/>
            <person name="Vlcek C."/>
            <person name="Voet M."/>
            <person name="Volckaert G."/>
            <person name="Voss H."/>
            <person name="Wambutt R."/>
            <person name="Wedler H."/>
            <person name="Wiemann S."/>
            <person name="Winsor B."/>
            <person name="Wolfe K.H."/>
            <person name="Zollner A."/>
            <person name="Zumstein E."/>
            <person name="Kleine K."/>
        </authorList>
    </citation>
    <scope>NUCLEOTIDE SEQUENCE [LARGE SCALE GENOMIC DNA]</scope>
    <source>
        <strain>ATCC 204508 / S288c</strain>
    </source>
</reference>
<reference key="4">
    <citation type="journal article" date="2014" name="G3 (Bethesda)">
        <title>The reference genome sequence of Saccharomyces cerevisiae: Then and now.</title>
        <authorList>
            <person name="Engel S.R."/>
            <person name="Dietrich F.S."/>
            <person name="Fisk D.G."/>
            <person name="Binkley G."/>
            <person name="Balakrishnan R."/>
            <person name="Costanzo M.C."/>
            <person name="Dwight S.S."/>
            <person name="Hitz B.C."/>
            <person name="Karra K."/>
            <person name="Nash R.S."/>
            <person name="Weng S."/>
            <person name="Wong E.D."/>
            <person name="Lloyd P."/>
            <person name="Skrzypek M.S."/>
            <person name="Miyasato S.R."/>
            <person name="Simison M."/>
            <person name="Cherry J.M."/>
        </authorList>
    </citation>
    <scope>GENOME REANNOTATION</scope>
    <source>
        <strain>ATCC 204508 / S288c</strain>
    </source>
</reference>
<reference key="5">
    <citation type="journal article" date="2007" name="Genome Res.">
        <title>Approaching a complete repository of sequence-verified protein-encoding clones for Saccharomyces cerevisiae.</title>
        <authorList>
            <person name="Hu Y."/>
            <person name="Rolfs A."/>
            <person name="Bhullar B."/>
            <person name="Murthy T.V.S."/>
            <person name="Zhu C."/>
            <person name="Berger M.F."/>
            <person name="Camargo A.A."/>
            <person name="Kelley F."/>
            <person name="McCarron S."/>
            <person name="Jepson D."/>
            <person name="Richardson A."/>
            <person name="Raphael J."/>
            <person name="Moreira D."/>
            <person name="Taycher E."/>
            <person name="Zuo D."/>
            <person name="Mohr S."/>
            <person name="Kane M.F."/>
            <person name="Williamson J."/>
            <person name="Simpson A.J.G."/>
            <person name="Bulyk M.L."/>
            <person name="Harlow E."/>
            <person name="Marsischky G."/>
            <person name="Kolodner R.D."/>
            <person name="LaBaer J."/>
        </authorList>
    </citation>
    <scope>NUCLEOTIDE SEQUENCE [GENOMIC DNA]</scope>
    <source>
        <strain>ATCC 204508 / S288c</strain>
    </source>
</reference>
<reference key="6">
    <citation type="journal article" date="2003" name="Nature">
        <title>Global analysis of protein expression in yeast.</title>
        <authorList>
            <person name="Ghaemmaghami S."/>
            <person name="Huh W.-K."/>
            <person name="Bower K."/>
            <person name="Howson R.W."/>
            <person name="Belle A."/>
            <person name="Dephoure N."/>
            <person name="O'Shea E.K."/>
            <person name="Weissman J.S."/>
        </authorList>
    </citation>
    <scope>LEVEL OF PROTEIN EXPRESSION [LARGE SCALE ANALYSIS]</scope>
</reference>
<reference key="7">
    <citation type="journal article" date="2012" name="Proc. Natl. Acad. Sci. U.S.A.">
        <title>N-terminal acetylome analyses and functional insights of the N-terminal acetyltransferase NatB.</title>
        <authorList>
            <person name="Van Damme P."/>
            <person name="Lasa M."/>
            <person name="Polevoda B."/>
            <person name="Gazquez C."/>
            <person name="Elosegui-Artola A."/>
            <person name="Kim D.S."/>
            <person name="De Juan-Pardo E."/>
            <person name="Demeyer K."/>
            <person name="Hole K."/>
            <person name="Larrea E."/>
            <person name="Timmerman E."/>
            <person name="Prieto J."/>
            <person name="Arnesen T."/>
            <person name="Sherman F."/>
            <person name="Gevaert K."/>
            <person name="Aldabe R."/>
        </authorList>
    </citation>
    <scope>ACETYLATION [LARGE SCALE ANALYSIS] AT SER-2</scope>
    <scope>CLEAVAGE OF INITIATOR METHIONINE [LARGE SCALE ANALYSIS]</scope>
    <scope>IDENTIFICATION BY MASS SPECTROMETRY [LARGE SCALE ANALYSIS]</scope>
</reference>
<accession>P54885</accession>
<accession>D6W321</accession>
<evidence type="ECO:0000269" key="1">
    <source>
    </source>
</evidence>
<evidence type="ECO:0000305" key="2"/>
<evidence type="ECO:0007744" key="3">
    <source>
    </source>
</evidence>
<evidence type="ECO:0007829" key="4">
    <source>
        <dbReference type="PDB" id="1VLU"/>
    </source>
</evidence>
<name>PROA_YEAST</name>
<protein>
    <recommendedName>
        <fullName>Gamma-glutamyl phosphate reductase</fullName>
        <shortName>GPR</shortName>
        <ecNumber>1.2.1.41</ecNumber>
    </recommendedName>
    <alternativeName>
        <fullName>Glutamate-5-semialdehyde dehydrogenase</fullName>
        <shortName>GSA dehydrogenase</shortName>
    </alternativeName>
    <alternativeName>
        <fullName>Glutamyl-gamma-semialdehyde dehydrogenase</fullName>
    </alternativeName>
</protein>
<feature type="initiator methionine" description="Removed" evidence="3">
    <location>
        <position position="1"/>
    </location>
</feature>
<feature type="chain" id="PRO_0000189824" description="Gamma-glutamyl phosphate reductase">
    <location>
        <begin position="2"/>
        <end position="456"/>
    </location>
</feature>
<feature type="modified residue" description="N-acetylserine" evidence="3">
    <location>
        <position position="2"/>
    </location>
</feature>
<feature type="helix" evidence="4">
    <location>
        <begin position="3"/>
        <end position="18"/>
    </location>
</feature>
<feature type="helix" evidence="4">
    <location>
        <begin position="23"/>
        <end position="39"/>
    </location>
</feature>
<feature type="helix" evidence="4">
    <location>
        <begin position="41"/>
        <end position="57"/>
    </location>
</feature>
<feature type="helix" evidence="4">
    <location>
        <begin position="62"/>
        <end position="68"/>
    </location>
</feature>
<feature type="helix" evidence="4">
    <location>
        <begin position="75"/>
        <end position="88"/>
    </location>
</feature>
<feature type="strand" evidence="4">
    <location>
        <begin position="92"/>
        <end position="94"/>
    </location>
</feature>
<feature type="strand" evidence="4">
    <location>
        <begin position="96"/>
        <end position="103"/>
    </location>
</feature>
<feature type="strand" evidence="4">
    <location>
        <begin position="106"/>
        <end position="114"/>
    </location>
</feature>
<feature type="strand" evidence="4">
    <location>
        <begin position="117"/>
        <end position="124"/>
    </location>
</feature>
<feature type="helix" evidence="4">
    <location>
        <begin position="127"/>
        <end position="139"/>
    </location>
</feature>
<feature type="strand" evidence="4">
    <location>
        <begin position="142"/>
        <end position="146"/>
    </location>
</feature>
<feature type="helix" evidence="4">
    <location>
        <begin position="149"/>
        <end position="151"/>
    </location>
</feature>
<feature type="helix" evidence="4">
    <location>
        <begin position="152"/>
        <end position="173"/>
    </location>
</feature>
<feature type="strand" evidence="4">
    <location>
        <begin position="179"/>
        <end position="182"/>
    </location>
</feature>
<feature type="helix" evidence="4">
    <location>
        <begin position="190"/>
        <end position="194"/>
    </location>
</feature>
<feature type="turn" evidence="4">
    <location>
        <begin position="196"/>
        <end position="198"/>
    </location>
</feature>
<feature type="strand" evidence="4">
    <location>
        <begin position="201"/>
        <end position="206"/>
    </location>
</feature>
<feature type="helix" evidence="4">
    <location>
        <begin position="208"/>
        <end position="216"/>
    </location>
</feature>
<feature type="strand" evidence="4">
    <location>
        <begin position="230"/>
        <end position="234"/>
    </location>
</feature>
<feature type="helix" evidence="4">
    <location>
        <begin position="240"/>
        <end position="249"/>
    </location>
</feature>
<feature type="strand" evidence="4">
    <location>
        <begin position="262"/>
        <end position="266"/>
    </location>
</feature>
<feature type="helix" evidence="4">
    <location>
        <begin position="273"/>
        <end position="284"/>
    </location>
</feature>
<feature type="strand" evidence="4">
    <location>
        <begin position="288"/>
        <end position="290"/>
    </location>
</feature>
<feature type="helix" evidence="4">
    <location>
        <begin position="292"/>
        <end position="305"/>
    </location>
</feature>
<feature type="helix" evidence="4">
    <location>
        <begin position="310"/>
        <end position="313"/>
    </location>
</feature>
<feature type="strand" evidence="4">
    <location>
        <begin position="335"/>
        <end position="338"/>
    </location>
</feature>
<feature type="helix" evidence="4">
    <location>
        <begin position="342"/>
        <end position="349"/>
    </location>
</feature>
<feature type="strand" evidence="4">
    <location>
        <begin position="357"/>
        <end position="361"/>
    </location>
</feature>
<feature type="helix" evidence="4">
    <location>
        <begin position="365"/>
        <end position="374"/>
    </location>
</feature>
<feature type="strand" evidence="4">
    <location>
        <begin position="378"/>
        <end position="384"/>
    </location>
</feature>
<feature type="helix" evidence="4">
    <location>
        <begin position="386"/>
        <end position="388"/>
    </location>
</feature>
<feature type="helix" evidence="4">
    <location>
        <begin position="416"/>
        <end position="418"/>
    </location>
</feature>
<feature type="strand" evidence="4">
    <location>
        <begin position="419"/>
        <end position="426"/>
    </location>
</feature>